<gene>
    <name evidence="1" type="primary">nadK</name>
    <name type="ordered locus">Ccel_1898</name>
</gene>
<protein>
    <recommendedName>
        <fullName evidence="1">NAD kinase</fullName>
        <ecNumber evidence="1">2.7.1.23</ecNumber>
    </recommendedName>
    <alternativeName>
        <fullName evidence="1">ATP-dependent NAD kinase</fullName>
    </alternativeName>
</protein>
<keyword id="KW-0067">ATP-binding</keyword>
<keyword id="KW-0963">Cytoplasm</keyword>
<keyword id="KW-0418">Kinase</keyword>
<keyword id="KW-0520">NAD</keyword>
<keyword id="KW-0521">NADP</keyword>
<keyword id="KW-0547">Nucleotide-binding</keyword>
<keyword id="KW-1185">Reference proteome</keyword>
<keyword id="KW-0808">Transferase</keyword>
<accession>B8I3A3</accession>
<dbReference type="EC" id="2.7.1.23" evidence="1"/>
<dbReference type="EMBL" id="CP001348">
    <property type="protein sequence ID" value="ACL76246.1"/>
    <property type="molecule type" value="Genomic_DNA"/>
</dbReference>
<dbReference type="RefSeq" id="WP_015925351.1">
    <property type="nucleotide sequence ID" value="NC_011898.1"/>
</dbReference>
<dbReference type="SMR" id="B8I3A3"/>
<dbReference type="STRING" id="394503.Ccel_1898"/>
<dbReference type="KEGG" id="cce:Ccel_1898"/>
<dbReference type="eggNOG" id="COG0061">
    <property type="taxonomic scope" value="Bacteria"/>
</dbReference>
<dbReference type="HOGENOM" id="CLU_008831_0_0_9"/>
<dbReference type="OrthoDB" id="9774737at2"/>
<dbReference type="Proteomes" id="UP000001349">
    <property type="component" value="Chromosome"/>
</dbReference>
<dbReference type="GO" id="GO:0005737">
    <property type="term" value="C:cytoplasm"/>
    <property type="evidence" value="ECO:0007669"/>
    <property type="project" value="UniProtKB-SubCell"/>
</dbReference>
<dbReference type="GO" id="GO:0005524">
    <property type="term" value="F:ATP binding"/>
    <property type="evidence" value="ECO:0007669"/>
    <property type="project" value="UniProtKB-KW"/>
</dbReference>
<dbReference type="GO" id="GO:0046872">
    <property type="term" value="F:metal ion binding"/>
    <property type="evidence" value="ECO:0007669"/>
    <property type="project" value="UniProtKB-UniRule"/>
</dbReference>
<dbReference type="GO" id="GO:0051287">
    <property type="term" value="F:NAD binding"/>
    <property type="evidence" value="ECO:0007669"/>
    <property type="project" value="UniProtKB-ARBA"/>
</dbReference>
<dbReference type="GO" id="GO:0003951">
    <property type="term" value="F:NAD+ kinase activity"/>
    <property type="evidence" value="ECO:0007669"/>
    <property type="project" value="UniProtKB-UniRule"/>
</dbReference>
<dbReference type="GO" id="GO:0019674">
    <property type="term" value="P:NAD metabolic process"/>
    <property type="evidence" value="ECO:0007669"/>
    <property type="project" value="InterPro"/>
</dbReference>
<dbReference type="GO" id="GO:0006741">
    <property type="term" value="P:NADP biosynthetic process"/>
    <property type="evidence" value="ECO:0007669"/>
    <property type="project" value="UniProtKB-UniRule"/>
</dbReference>
<dbReference type="Gene3D" id="3.40.50.10330">
    <property type="entry name" value="Probable inorganic polyphosphate/atp-NAD kinase, domain 1"/>
    <property type="match status" value="1"/>
</dbReference>
<dbReference type="Gene3D" id="2.60.200.30">
    <property type="entry name" value="Probable inorganic polyphosphate/atp-NAD kinase, domain 2"/>
    <property type="match status" value="1"/>
</dbReference>
<dbReference type="HAMAP" id="MF_00361">
    <property type="entry name" value="NAD_kinase"/>
    <property type="match status" value="1"/>
</dbReference>
<dbReference type="InterPro" id="IPR017438">
    <property type="entry name" value="ATP-NAD_kinase_N"/>
</dbReference>
<dbReference type="InterPro" id="IPR017437">
    <property type="entry name" value="ATP-NAD_kinase_PpnK-typ_C"/>
</dbReference>
<dbReference type="InterPro" id="IPR016064">
    <property type="entry name" value="NAD/diacylglycerol_kinase_sf"/>
</dbReference>
<dbReference type="InterPro" id="IPR002504">
    <property type="entry name" value="NADK"/>
</dbReference>
<dbReference type="PANTHER" id="PTHR20275">
    <property type="entry name" value="NAD KINASE"/>
    <property type="match status" value="1"/>
</dbReference>
<dbReference type="PANTHER" id="PTHR20275:SF0">
    <property type="entry name" value="NAD KINASE"/>
    <property type="match status" value="1"/>
</dbReference>
<dbReference type="Pfam" id="PF01513">
    <property type="entry name" value="NAD_kinase"/>
    <property type="match status" value="1"/>
</dbReference>
<dbReference type="Pfam" id="PF20143">
    <property type="entry name" value="NAD_kinase_C"/>
    <property type="match status" value="1"/>
</dbReference>
<dbReference type="SUPFAM" id="SSF111331">
    <property type="entry name" value="NAD kinase/diacylglycerol kinase-like"/>
    <property type="match status" value="1"/>
</dbReference>
<reference key="1">
    <citation type="submission" date="2009-01" db="EMBL/GenBank/DDBJ databases">
        <title>Complete sequence of Clostridium cellulolyticum H10.</title>
        <authorList>
            <consortium name="US DOE Joint Genome Institute"/>
            <person name="Lucas S."/>
            <person name="Copeland A."/>
            <person name="Lapidus A."/>
            <person name="Glavina del Rio T."/>
            <person name="Dalin E."/>
            <person name="Tice H."/>
            <person name="Bruce D."/>
            <person name="Goodwin L."/>
            <person name="Pitluck S."/>
            <person name="Chertkov O."/>
            <person name="Saunders E."/>
            <person name="Brettin T."/>
            <person name="Detter J.C."/>
            <person name="Han C."/>
            <person name="Larimer F."/>
            <person name="Land M."/>
            <person name="Hauser L."/>
            <person name="Kyrpides N."/>
            <person name="Ivanova N."/>
            <person name="Zhou J."/>
            <person name="Richardson P."/>
        </authorList>
    </citation>
    <scope>NUCLEOTIDE SEQUENCE [LARGE SCALE GENOMIC DNA]</scope>
    <source>
        <strain>ATCC 35319 / DSM 5812 / JCM 6584 / H10</strain>
    </source>
</reference>
<organism>
    <name type="scientific">Ruminiclostridium cellulolyticum (strain ATCC 35319 / DSM 5812 / JCM 6584 / H10)</name>
    <name type="common">Clostridium cellulolyticum</name>
    <dbReference type="NCBI Taxonomy" id="394503"/>
    <lineage>
        <taxon>Bacteria</taxon>
        <taxon>Bacillati</taxon>
        <taxon>Bacillota</taxon>
        <taxon>Clostridia</taxon>
        <taxon>Eubacteriales</taxon>
        <taxon>Oscillospiraceae</taxon>
        <taxon>Ruminiclostridium</taxon>
    </lineage>
</organism>
<proteinExistence type="inferred from homology"/>
<comment type="function">
    <text evidence="1">Involved in the regulation of the intracellular balance of NAD and NADP, and is a key enzyme in the biosynthesis of NADP. Catalyzes specifically the phosphorylation on 2'-hydroxyl of the adenosine moiety of NAD to yield NADP.</text>
</comment>
<comment type="catalytic activity">
    <reaction evidence="1">
        <text>NAD(+) + ATP = ADP + NADP(+) + H(+)</text>
        <dbReference type="Rhea" id="RHEA:18629"/>
        <dbReference type="ChEBI" id="CHEBI:15378"/>
        <dbReference type="ChEBI" id="CHEBI:30616"/>
        <dbReference type="ChEBI" id="CHEBI:57540"/>
        <dbReference type="ChEBI" id="CHEBI:58349"/>
        <dbReference type="ChEBI" id="CHEBI:456216"/>
        <dbReference type="EC" id="2.7.1.23"/>
    </reaction>
</comment>
<comment type="cofactor">
    <cofactor evidence="1">
        <name>a divalent metal cation</name>
        <dbReference type="ChEBI" id="CHEBI:60240"/>
    </cofactor>
</comment>
<comment type="subcellular location">
    <subcellularLocation>
        <location evidence="1">Cytoplasm</location>
    </subcellularLocation>
</comment>
<comment type="similarity">
    <text evidence="1">Belongs to the NAD kinase family.</text>
</comment>
<evidence type="ECO:0000255" key="1">
    <source>
        <dbReference type="HAMAP-Rule" id="MF_00361"/>
    </source>
</evidence>
<name>NADK_RUMCH</name>
<sequence>MKKIGVITNREKDKGLKYTNQLVESIEKHGGQAVLPTYDGSFQMDDIDNQVVEICNNCDMVICLGGDGTFLRTARTAYLYGLPMLGINLGSLGFLTDVEKGEIDKAVENILNNRFCLEDRIMLTSKLYKDGKLIARDVAINDIVISRGGIPRILHLSTYIDNNLVEMFPGDGIVVATPTGSTAYSLSAGGPIVEPTSGLILITPICPHILSSRALITSDMRKIKICVSQGFEHKATVTVDGQKNLEITGGDYLEIEKANSTVKIIRVNSKNFFTVLRSKIYERKEE</sequence>
<feature type="chain" id="PRO_1000133565" description="NAD kinase">
    <location>
        <begin position="1"/>
        <end position="286"/>
    </location>
</feature>
<feature type="active site" description="Proton acceptor" evidence="1">
    <location>
        <position position="67"/>
    </location>
</feature>
<feature type="binding site" evidence="1">
    <location>
        <begin position="67"/>
        <end position="68"/>
    </location>
    <ligand>
        <name>NAD(+)</name>
        <dbReference type="ChEBI" id="CHEBI:57540"/>
    </ligand>
</feature>
<feature type="binding site" evidence="1">
    <location>
        <position position="72"/>
    </location>
    <ligand>
        <name>NAD(+)</name>
        <dbReference type="ChEBI" id="CHEBI:57540"/>
    </ligand>
</feature>
<feature type="binding site" evidence="1">
    <location>
        <begin position="141"/>
        <end position="142"/>
    </location>
    <ligand>
        <name>NAD(+)</name>
        <dbReference type="ChEBI" id="CHEBI:57540"/>
    </ligand>
</feature>
<feature type="binding site" evidence="1">
    <location>
        <position position="152"/>
    </location>
    <ligand>
        <name>NAD(+)</name>
        <dbReference type="ChEBI" id="CHEBI:57540"/>
    </ligand>
</feature>
<feature type="binding site" evidence="1">
    <location>
        <position position="171"/>
    </location>
    <ligand>
        <name>NAD(+)</name>
        <dbReference type="ChEBI" id="CHEBI:57540"/>
    </ligand>
</feature>
<feature type="binding site" evidence="1">
    <location>
        <begin position="182"/>
        <end position="187"/>
    </location>
    <ligand>
        <name>NAD(+)</name>
        <dbReference type="ChEBI" id="CHEBI:57540"/>
    </ligand>
</feature>
<feature type="binding site" evidence="1">
    <location>
        <position position="242"/>
    </location>
    <ligand>
        <name>NAD(+)</name>
        <dbReference type="ChEBI" id="CHEBI:57540"/>
    </ligand>
</feature>